<comment type="similarity">
    <text evidence="1">Belongs to the bacterial ribosomal protein bL36 family.</text>
</comment>
<name>RL36_STRZT</name>
<protein>
    <recommendedName>
        <fullName evidence="1">Large ribosomal subunit protein bL36</fullName>
    </recommendedName>
    <alternativeName>
        <fullName evidence="2">50S ribosomal protein L36</fullName>
    </alternativeName>
</protein>
<sequence length="38" mass="4421">MKVRPSVKPICEYCKVIRRNGRVMVICPANPKHKQRQG</sequence>
<proteinExistence type="inferred from homology"/>
<evidence type="ECO:0000255" key="1">
    <source>
        <dbReference type="HAMAP-Rule" id="MF_00251"/>
    </source>
</evidence>
<evidence type="ECO:0000305" key="2"/>
<accession>C1CPB1</accession>
<dbReference type="EMBL" id="CP000921">
    <property type="protein sequence ID" value="ACO23536.1"/>
    <property type="molecule type" value="Genomic_DNA"/>
</dbReference>
<dbReference type="RefSeq" id="WP_001808836.1">
    <property type="nucleotide sequence ID" value="NC_012469.1"/>
</dbReference>
<dbReference type="SMR" id="C1CPB1"/>
<dbReference type="GeneID" id="93964224"/>
<dbReference type="KEGG" id="snt:SPT_0279"/>
<dbReference type="HOGENOM" id="CLU_135723_6_2_9"/>
<dbReference type="GO" id="GO:0005737">
    <property type="term" value="C:cytoplasm"/>
    <property type="evidence" value="ECO:0007669"/>
    <property type="project" value="UniProtKB-ARBA"/>
</dbReference>
<dbReference type="GO" id="GO:1990904">
    <property type="term" value="C:ribonucleoprotein complex"/>
    <property type="evidence" value="ECO:0007669"/>
    <property type="project" value="UniProtKB-KW"/>
</dbReference>
<dbReference type="GO" id="GO:0005840">
    <property type="term" value="C:ribosome"/>
    <property type="evidence" value="ECO:0007669"/>
    <property type="project" value="UniProtKB-KW"/>
</dbReference>
<dbReference type="GO" id="GO:0003735">
    <property type="term" value="F:structural constituent of ribosome"/>
    <property type="evidence" value="ECO:0007669"/>
    <property type="project" value="InterPro"/>
</dbReference>
<dbReference type="GO" id="GO:0006412">
    <property type="term" value="P:translation"/>
    <property type="evidence" value="ECO:0007669"/>
    <property type="project" value="UniProtKB-UniRule"/>
</dbReference>
<dbReference type="HAMAP" id="MF_00251">
    <property type="entry name" value="Ribosomal_bL36"/>
    <property type="match status" value="1"/>
</dbReference>
<dbReference type="InterPro" id="IPR000473">
    <property type="entry name" value="Ribosomal_bL36"/>
</dbReference>
<dbReference type="InterPro" id="IPR035977">
    <property type="entry name" value="Ribosomal_bL36_sp"/>
</dbReference>
<dbReference type="NCBIfam" id="TIGR01022">
    <property type="entry name" value="rpmJ_bact"/>
    <property type="match status" value="1"/>
</dbReference>
<dbReference type="PANTHER" id="PTHR42888">
    <property type="entry name" value="50S RIBOSOMAL PROTEIN L36, CHLOROPLASTIC"/>
    <property type="match status" value="1"/>
</dbReference>
<dbReference type="PANTHER" id="PTHR42888:SF1">
    <property type="entry name" value="LARGE RIBOSOMAL SUBUNIT PROTEIN BL36C"/>
    <property type="match status" value="1"/>
</dbReference>
<dbReference type="Pfam" id="PF00444">
    <property type="entry name" value="Ribosomal_L36"/>
    <property type="match status" value="1"/>
</dbReference>
<dbReference type="SUPFAM" id="SSF57840">
    <property type="entry name" value="Ribosomal protein L36"/>
    <property type="match status" value="1"/>
</dbReference>
<dbReference type="PROSITE" id="PS00828">
    <property type="entry name" value="RIBOSOMAL_L36"/>
    <property type="match status" value="1"/>
</dbReference>
<feature type="chain" id="PRO_1000125507" description="Large ribosomal subunit protein bL36">
    <location>
        <begin position="1"/>
        <end position="38"/>
    </location>
</feature>
<organism>
    <name type="scientific">Streptococcus pneumoniae (strain Taiwan19F-14)</name>
    <dbReference type="NCBI Taxonomy" id="487213"/>
    <lineage>
        <taxon>Bacteria</taxon>
        <taxon>Bacillati</taxon>
        <taxon>Bacillota</taxon>
        <taxon>Bacilli</taxon>
        <taxon>Lactobacillales</taxon>
        <taxon>Streptococcaceae</taxon>
        <taxon>Streptococcus</taxon>
    </lineage>
</organism>
<gene>
    <name evidence="1" type="primary">rpmJ</name>
    <name type="ordered locus">SPT_0279</name>
</gene>
<keyword id="KW-0687">Ribonucleoprotein</keyword>
<keyword id="KW-0689">Ribosomal protein</keyword>
<reference key="1">
    <citation type="journal article" date="2010" name="Genome Biol.">
        <title>Structure and dynamics of the pan-genome of Streptococcus pneumoniae and closely related species.</title>
        <authorList>
            <person name="Donati C."/>
            <person name="Hiller N.L."/>
            <person name="Tettelin H."/>
            <person name="Muzzi A."/>
            <person name="Croucher N.J."/>
            <person name="Angiuoli S.V."/>
            <person name="Oggioni M."/>
            <person name="Dunning Hotopp J.C."/>
            <person name="Hu F.Z."/>
            <person name="Riley D.R."/>
            <person name="Covacci A."/>
            <person name="Mitchell T.J."/>
            <person name="Bentley S.D."/>
            <person name="Kilian M."/>
            <person name="Ehrlich G.D."/>
            <person name="Rappuoli R."/>
            <person name="Moxon E.R."/>
            <person name="Masignani V."/>
        </authorList>
    </citation>
    <scope>NUCLEOTIDE SEQUENCE [LARGE SCALE GENOMIC DNA]</scope>
    <source>
        <strain>Taiwan19F-14</strain>
    </source>
</reference>